<keyword id="KW-0963">Cytoplasm</keyword>
<keyword id="KW-0945">Host-virus interaction</keyword>
<keyword id="KW-0539">Nucleus</keyword>
<keyword id="KW-1185">Reference proteome</keyword>
<keyword id="KW-0677">Repeat</keyword>
<keyword id="KW-0694">RNA-binding</keyword>
<keyword id="KW-0810">Translation regulation</keyword>
<accession>Q9FXA2</accession>
<evidence type="ECO:0000250" key="1"/>
<evidence type="ECO:0000255" key="2">
    <source>
        <dbReference type="PROSITE-ProRule" id="PRU00176"/>
    </source>
</evidence>
<evidence type="ECO:0000255" key="3">
    <source>
        <dbReference type="PROSITE-ProRule" id="PRU00641"/>
    </source>
</evidence>
<evidence type="ECO:0000256" key="4">
    <source>
        <dbReference type="SAM" id="MobiDB-lite"/>
    </source>
</evidence>
<evidence type="ECO:0000269" key="5">
    <source>
    </source>
</evidence>
<evidence type="ECO:0000269" key="6">
    <source>
    </source>
</evidence>
<evidence type="ECO:0000305" key="7"/>
<gene>
    <name type="primary">PAB8</name>
    <name type="ordered locus">At1g49760</name>
    <name type="ORF">F14J22.3</name>
</gene>
<sequence>MAQIQHQGQNANGGVAVPGAAAAEAAAAAAGAAAAAAGAAQQGTTSLYVGDLDATVTDSQLFEAFTQAGQVVSVRVCRDMTTRRSLGYGYVNYATPQDASRALNELNFMALNGRAIRVMYSVRDPSLRKSGVGNIFIKNLDKSIDHKALHETFSAFGPILSCKVAVDPSGQSKGYGFVQYDTDEAAQGAIDKLNGMLLNDKQVYVGPFVHKLQRDPSGEKVKFTNVYVKNLSESLSDEELNKVFGEFGVTTSCVIMRDGEGKSKGFGFVNFENSDDAARAVDALNGKTFDDKEWFVGKAQKKSERETELKQKFEQSLKEAADKSQGSNLYVKNLDESVTDDKLREHFAPFGTITSCKVMRDPSGVSRGSGFVAFSTPEEATRAITEMNGKMIVTKPLYVALAQRKEDRKARLQAQFSQMRPVNMPPAVGPRMQMYPPGGPPMGQQLFYGQGPPAMIPQPGFGYQQQLVPGMRPGGSPMPNFFMPMMQQGQQQQQQQQQQQRPGGGRRGALPQPQQPSPMMQQQMHPRGRMYRYPQRDVNTMPGPTQNMLSVPYDVSSGGGVHHRDSPTSQPVPIVALATRLANAAPEQQRTMLGENLYPLVEQLEPESAAKVTGMLLEMDQTEVLHLLESPEALKAKVTEAMDVLRSVAQQQAGGAADQLASLSLGDNIVP</sequence>
<organism>
    <name type="scientific">Arabidopsis thaliana</name>
    <name type="common">Mouse-ear cress</name>
    <dbReference type="NCBI Taxonomy" id="3702"/>
    <lineage>
        <taxon>Eukaryota</taxon>
        <taxon>Viridiplantae</taxon>
        <taxon>Streptophyta</taxon>
        <taxon>Embryophyta</taxon>
        <taxon>Tracheophyta</taxon>
        <taxon>Spermatophyta</taxon>
        <taxon>Magnoliopsida</taxon>
        <taxon>eudicotyledons</taxon>
        <taxon>Gunneridae</taxon>
        <taxon>Pentapetalae</taxon>
        <taxon>rosids</taxon>
        <taxon>malvids</taxon>
        <taxon>Brassicales</taxon>
        <taxon>Brassicaceae</taxon>
        <taxon>Camelineae</taxon>
        <taxon>Arabidopsis</taxon>
    </lineage>
</organism>
<reference key="1">
    <citation type="journal article" date="2000" name="Nature">
        <title>Sequence and analysis of chromosome 1 of the plant Arabidopsis thaliana.</title>
        <authorList>
            <person name="Theologis A."/>
            <person name="Ecker J.R."/>
            <person name="Palm C.J."/>
            <person name="Federspiel N.A."/>
            <person name="Kaul S."/>
            <person name="White O."/>
            <person name="Alonso J."/>
            <person name="Altafi H."/>
            <person name="Araujo R."/>
            <person name="Bowman C.L."/>
            <person name="Brooks S.Y."/>
            <person name="Buehler E."/>
            <person name="Chan A."/>
            <person name="Chao Q."/>
            <person name="Chen H."/>
            <person name="Cheuk R.F."/>
            <person name="Chin C.W."/>
            <person name="Chung M.K."/>
            <person name="Conn L."/>
            <person name="Conway A.B."/>
            <person name="Conway A.R."/>
            <person name="Creasy T.H."/>
            <person name="Dewar K."/>
            <person name="Dunn P."/>
            <person name="Etgu P."/>
            <person name="Feldblyum T.V."/>
            <person name="Feng J.-D."/>
            <person name="Fong B."/>
            <person name="Fujii C.Y."/>
            <person name="Gill J.E."/>
            <person name="Goldsmith A.D."/>
            <person name="Haas B."/>
            <person name="Hansen N.F."/>
            <person name="Hughes B."/>
            <person name="Huizar L."/>
            <person name="Hunter J.L."/>
            <person name="Jenkins J."/>
            <person name="Johnson-Hopson C."/>
            <person name="Khan S."/>
            <person name="Khaykin E."/>
            <person name="Kim C.J."/>
            <person name="Koo H.L."/>
            <person name="Kremenetskaia I."/>
            <person name="Kurtz D.B."/>
            <person name="Kwan A."/>
            <person name="Lam B."/>
            <person name="Langin-Hooper S."/>
            <person name="Lee A."/>
            <person name="Lee J.M."/>
            <person name="Lenz C.A."/>
            <person name="Li J.H."/>
            <person name="Li Y.-P."/>
            <person name="Lin X."/>
            <person name="Liu S.X."/>
            <person name="Liu Z.A."/>
            <person name="Luros J.S."/>
            <person name="Maiti R."/>
            <person name="Marziali A."/>
            <person name="Militscher J."/>
            <person name="Miranda M."/>
            <person name="Nguyen M."/>
            <person name="Nierman W.C."/>
            <person name="Osborne B.I."/>
            <person name="Pai G."/>
            <person name="Peterson J."/>
            <person name="Pham P.K."/>
            <person name="Rizzo M."/>
            <person name="Rooney T."/>
            <person name="Rowley D."/>
            <person name="Sakano H."/>
            <person name="Salzberg S.L."/>
            <person name="Schwartz J.R."/>
            <person name="Shinn P."/>
            <person name="Southwick A.M."/>
            <person name="Sun H."/>
            <person name="Tallon L.J."/>
            <person name="Tambunga G."/>
            <person name="Toriumi M.J."/>
            <person name="Town C.D."/>
            <person name="Utterback T."/>
            <person name="Van Aken S."/>
            <person name="Vaysberg M."/>
            <person name="Vysotskaia V.S."/>
            <person name="Walker M."/>
            <person name="Wu D."/>
            <person name="Yu G."/>
            <person name="Fraser C.M."/>
            <person name="Venter J.C."/>
            <person name="Davis R.W."/>
        </authorList>
    </citation>
    <scope>NUCLEOTIDE SEQUENCE [LARGE SCALE GENOMIC DNA]</scope>
    <source>
        <strain>cv. Columbia</strain>
    </source>
</reference>
<reference key="2">
    <citation type="journal article" date="2017" name="Plant J.">
        <title>Araport11: a complete reannotation of the Arabidopsis thaliana reference genome.</title>
        <authorList>
            <person name="Cheng C.Y."/>
            <person name="Krishnakumar V."/>
            <person name="Chan A.P."/>
            <person name="Thibaud-Nissen F."/>
            <person name="Schobel S."/>
            <person name="Town C.D."/>
        </authorList>
    </citation>
    <scope>GENOME REANNOTATION</scope>
    <source>
        <strain>cv. Columbia</strain>
    </source>
</reference>
<reference key="3">
    <citation type="journal article" date="2003" name="Science">
        <title>Empirical analysis of transcriptional activity in the Arabidopsis genome.</title>
        <authorList>
            <person name="Yamada K."/>
            <person name="Lim J."/>
            <person name="Dale J.M."/>
            <person name="Chen H."/>
            <person name="Shinn P."/>
            <person name="Palm C.J."/>
            <person name="Southwick A.M."/>
            <person name="Wu H.C."/>
            <person name="Kim C.J."/>
            <person name="Nguyen M."/>
            <person name="Pham P.K."/>
            <person name="Cheuk R.F."/>
            <person name="Karlin-Newmann G."/>
            <person name="Liu S.X."/>
            <person name="Lam B."/>
            <person name="Sakano H."/>
            <person name="Wu T."/>
            <person name="Yu G."/>
            <person name="Miranda M."/>
            <person name="Quach H.L."/>
            <person name="Tripp M."/>
            <person name="Chang C.H."/>
            <person name="Lee J.M."/>
            <person name="Toriumi M.J."/>
            <person name="Chan M.M."/>
            <person name="Tang C.C."/>
            <person name="Onodera C.S."/>
            <person name="Deng J.M."/>
            <person name="Akiyama K."/>
            <person name="Ansari Y."/>
            <person name="Arakawa T."/>
            <person name="Banh J."/>
            <person name="Banno F."/>
            <person name="Bowser L."/>
            <person name="Brooks S.Y."/>
            <person name="Carninci P."/>
            <person name="Chao Q."/>
            <person name="Choy N."/>
            <person name="Enju A."/>
            <person name="Goldsmith A.D."/>
            <person name="Gurjal M."/>
            <person name="Hansen N.F."/>
            <person name="Hayashizaki Y."/>
            <person name="Johnson-Hopson C."/>
            <person name="Hsuan V.W."/>
            <person name="Iida K."/>
            <person name="Karnes M."/>
            <person name="Khan S."/>
            <person name="Koesema E."/>
            <person name="Ishida J."/>
            <person name="Jiang P.X."/>
            <person name="Jones T."/>
            <person name="Kawai J."/>
            <person name="Kamiya A."/>
            <person name="Meyers C."/>
            <person name="Nakajima M."/>
            <person name="Narusaka M."/>
            <person name="Seki M."/>
            <person name="Sakurai T."/>
            <person name="Satou M."/>
            <person name="Tamse R."/>
            <person name="Vaysberg M."/>
            <person name="Wallender E.K."/>
            <person name="Wong C."/>
            <person name="Yamamura Y."/>
            <person name="Yuan S."/>
            <person name="Shinozaki K."/>
            <person name="Davis R.W."/>
            <person name="Theologis A."/>
            <person name="Ecker J.R."/>
        </authorList>
    </citation>
    <scope>NUCLEOTIDE SEQUENCE [LARGE SCALE MRNA]</scope>
    <source>
        <strain>cv. Columbia</strain>
    </source>
</reference>
<reference key="4">
    <citation type="journal article" date="2003" name="Genetics">
        <title>Unexpected complexity of poly(A)-binding protein gene families in flowering plants: three conserved lineages that are at least 200 million years old and possible auto- and cross-regulation.</title>
        <authorList>
            <person name="Belostotsky D.A."/>
        </authorList>
    </citation>
    <scope>GENE FAMILY</scope>
</reference>
<reference key="5">
    <citation type="journal article" date="2008" name="J. Gen. Virol.">
        <title>Arabidopsis thaliana class II poly(A)-binding proteins are required for efficient multiplication of turnip mosaic virus.</title>
        <authorList>
            <person name="Dufresne P.J."/>
            <person name="Ubalijoro E."/>
            <person name="Fortin M.G."/>
            <person name="Laliberte J.F."/>
        </authorList>
    </citation>
    <scope>INDUCTION</scope>
    <scope>INTERACTION WITH VIRAL VPG-PRO AND RDRP</scope>
    <scope>DISRUPTION PHENOTYPE</scope>
</reference>
<reference key="6">
    <citation type="journal article" date="2012" name="Plant Sci.">
        <title>ERD15--an attenuator of plant ABA responses and stomatal aperture.</title>
        <authorList>
            <person name="Aalto M.K."/>
            <person name="Helenius E."/>
            <person name="Kariola T."/>
            <person name="Pennanen V."/>
            <person name="Heino P."/>
            <person name="Horak H."/>
            <person name="Puzorjova I."/>
            <person name="Kollist H."/>
            <person name="Palva E.T."/>
        </authorList>
    </citation>
    <scope>INTERACTION WITH ERD15/CID1</scope>
</reference>
<name>PABP8_ARATH</name>
<comment type="function">
    <text evidence="1">Binds the poly(A) tail of mRNA. Appears to be an important mediator of the multiple roles of the poly(A) tail in mRNA biogenesis, stability and translation (By similarity). During infection with potyvirus TuMV, acts as a potential integral component of the viral replicase complex that could play an important role in the regulation of potyviral RNA-dependent RNA polymerase (RdRp) (By similarity).</text>
</comment>
<comment type="subunit">
    <text evidence="5 6">Interacts with ERD15/CID1. Interacts with Turnip mosaic virus (TuMV) VPg-Pro and RNA-dependent RNA polymerase (RdRp).</text>
</comment>
<comment type="subcellular location">
    <subcellularLocation>
        <location evidence="1">Cytoplasm</location>
    </subcellularLocation>
    <subcellularLocation>
        <location evidence="1">Nucleus</location>
    </subcellularLocation>
</comment>
<comment type="tissue specificity">
    <text>Expressed predominantly in immature flowers.</text>
</comment>
<comment type="induction">
    <text evidence="5">By potyvirus TuMV infection.</text>
</comment>
<comment type="disruption phenotype">
    <text evidence="5">Pab2 and pab8 double mutants show significant growth and development defects and more resistance to Turnip mosaic virus (TuMV).</text>
</comment>
<comment type="miscellaneous">
    <text>A.thaliana contains 8 PABP genes.</text>
</comment>
<comment type="similarity">
    <text evidence="7">Belongs to the polyadenylate-binding protein type-1 family.</text>
</comment>
<protein>
    <recommendedName>
        <fullName>Polyadenylate-binding protein 8</fullName>
        <shortName>PABP-8</shortName>
        <shortName>Poly(A)-binding protein 8</shortName>
    </recommendedName>
</protein>
<feature type="chain" id="PRO_0000422645" description="Polyadenylate-binding protein 8">
    <location>
        <begin position="1"/>
        <end position="671"/>
    </location>
</feature>
<feature type="domain" description="RRM 1" evidence="2">
    <location>
        <begin position="45"/>
        <end position="123"/>
    </location>
</feature>
<feature type="domain" description="RRM 2" evidence="2">
    <location>
        <begin position="133"/>
        <end position="210"/>
    </location>
</feature>
<feature type="domain" description="RRM 3" evidence="2">
    <location>
        <begin position="224"/>
        <end position="301"/>
    </location>
</feature>
<feature type="domain" description="RRM 4" evidence="2">
    <location>
        <begin position="327"/>
        <end position="404"/>
    </location>
</feature>
<feature type="domain" description="PABC" evidence="3">
    <location>
        <begin position="573"/>
        <end position="650"/>
    </location>
</feature>
<feature type="region of interest" description="Disordered" evidence="4">
    <location>
        <begin position="467"/>
        <end position="526"/>
    </location>
</feature>
<feature type="compositionally biased region" description="Low complexity" evidence="4">
    <location>
        <begin position="483"/>
        <end position="501"/>
    </location>
</feature>
<feature type="compositionally biased region" description="Low complexity" evidence="4">
    <location>
        <begin position="508"/>
        <end position="525"/>
    </location>
</feature>
<proteinExistence type="evidence at protein level"/>
<dbReference type="EMBL" id="AC011807">
    <property type="protein sequence ID" value="AAG13056.1"/>
    <property type="molecule type" value="Genomic_DNA"/>
</dbReference>
<dbReference type="EMBL" id="CP002684">
    <property type="protein sequence ID" value="AEE32472.1"/>
    <property type="molecule type" value="Genomic_DNA"/>
</dbReference>
<dbReference type="EMBL" id="CP002684">
    <property type="protein sequence ID" value="AEE32473.1"/>
    <property type="molecule type" value="Genomic_DNA"/>
</dbReference>
<dbReference type="EMBL" id="AF370517">
    <property type="protein sequence ID" value="AAK43894.1"/>
    <property type="molecule type" value="mRNA"/>
</dbReference>
<dbReference type="EMBL" id="AY064622">
    <property type="protein sequence ID" value="AAL47336.1"/>
    <property type="molecule type" value="mRNA"/>
</dbReference>
<dbReference type="PIR" id="C96534">
    <property type="entry name" value="C96534"/>
</dbReference>
<dbReference type="RefSeq" id="NP_001185184.1">
    <property type="nucleotide sequence ID" value="NM_001198255.1"/>
</dbReference>
<dbReference type="RefSeq" id="NP_564554.1">
    <property type="nucleotide sequence ID" value="NM_103863.3"/>
</dbReference>
<dbReference type="SMR" id="Q9FXA2"/>
<dbReference type="BioGRID" id="26624">
    <property type="interactions" value="9"/>
</dbReference>
<dbReference type="FunCoup" id="Q9FXA2">
    <property type="interactions" value="3529"/>
</dbReference>
<dbReference type="IntAct" id="Q9FXA2">
    <property type="interactions" value="7"/>
</dbReference>
<dbReference type="STRING" id="3702.Q9FXA2"/>
<dbReference type="GlyGen" id="Q9FXA2">
    <property type="glycosylation" value="2 sites, 1 O-linked glycan (2 sites)"/>
</dbReference>
<dbReference type="iPTMnet" id="Q9FXA2"/>
<dbReference type="MetOSite" id="Q9FXA2"/>
<dbReference type="PaxDb" id="3702-AT1G49760.1"/>
<dbReference type="ProMEX" id="Q9FXA2"/>
<dbReference type="ProteomicsDB" id="248651"/>
<dbReference type="EnsemblPlants" id="AT1G49760.1">
    <property type="protein sequence ID" value="AT1G49760.1"/>
    <property type="gene ID" value="AT1G49760"/>
</dbReference>
<dbReference type="EnsemblPlants" id="AT1G49760.2">
    <property type="protein sequence ID" value="AT1G49760.2"/>
    <property type="gene ID" value="AT1G49760"/>
</dbReference>
<dbReference type="GeneID" id="841399"/>
<dbReference type="Gramene" id="AT1G49760.1">
    <property type="protein sequence ID" value="AT1G49760.1"/>
    <property type="gene ID" value="AT1G49760"/>
</dbReference>
<dbReference type="Gramene" id="AT1G49760.2">
    <property type="protein sequence ID" value="AT1G49760.2"/>
    <property type="gene ID" value="AT1G49760"/>
</dbReference>
<dbReference type="KEGG" id="ath:AT1G49760"/>
<dbReference type="Araport" id="AT1G49760"/>
<dbReference type="TAIR" id="AT1G49760">
    <property type="gene designation" value="PAB8"/>
</dbReference>
<dbReference type="eggNOG" id="KOG0123">
    <property type="taxonomic scope" value="Eukaryota"/>
</dbReference>
<dbReference type="HOGENOM" id="CLU_012062_22_4_1"/>
<dbReference type="InParanoid" id="Q9FXA2"/>
<dbReference type="OMA" id="DHMNGKE"/>
<dbReference type="OrthoDB" id="19742at2759"/>
<dbReference type="PhylomeDB" id="Q9FXA2"/>
<dbReference type="PRO" id="PR:Q9FXA2"/>
<dbReference type="Proteomes" id="UP000006548">
    <property type="component" value="Chromosome 1"/>
</dbReference>
<dbReference type="ExpressionAtlas" id="Q9FXA2">
    <property type="expression patterns" value="baseline and differential"/>
</dbReference>
<dbReference type="GO" id="GO:0005829">
    <property type="term" value="C:cytosol"/>
    <property type="evidence" value="ECO:0007005"/>
    <property type="project" value="TAIR"/>
</dbReference>
<dbReference type="GO" id="GO:0005634">
    <property type="term" value="C:nucleus"/>
    <property type="evidence" value="ECO:0007005"/>
    <property type="project" value="TAIR"/>
</dbReference>
<dbReference type="GO" id="GO:0003729">
    <property type="term" value="F:mRNA binding"/>
    <property type="evidence" value="ECO:0000314"/>
    <property type="project" value="TAIR"/>
</dbReference>
<dbReference type="GO" id="GO:0006417">
    <property type="term" value="P:regulation of translation"/>
    <property type="evidence" value="ECO:0007669"/>
    <property type="project" value="UniProtKB-KW"/>
</dbReference>
<dbReference type="CDD" id="cd12379">
    <property type="entry name" value="RRM2_I_PABPs"/>
    <property type="match status" value="1"/>
</dbReference>
<dbReference type="CDD" id="cd12380">
    <property type="entry name" value="RRM3_I_PABPs"/>
    <property type="match status" value="1"/>
</dbReference>
<dbReference type="CDD" id="cd12381">
    <property type="entry name" value="RRM4_I_PABPs"/>
    <property type="match status" value="1"/>
</dbReference>
<dbReference type="FunFam" id="3.30.70.330:FF:002267">
    <property type="match status" value="1"/>
</dbReference>
<dbReference type="FunFam" id="1.10.1900.10:FF:000003">
    <property type="entry name" value="Polyadenylate-binding protein"/>
    <property type="match status" value="1"/>
</dbReference>
<dbReference type="FunFam" id="3.30.70.330:FF:000217">
    <property type="entry name" value="Polyadenylate-binding protein"/>
    <property type="match status" value="1"/>
</dbReference>
<dbReference type="FunFam" id="3.30.70.330:FF:000239">
    <property type="entry name" value="Polyadenylate-binding protein"/>
    <property type="match status" value="1"/>
</dbReference>
<dbReference type="FunFam" id="3.30.70.330:FF:000285">
    <property type="entry name" value="Polyadenylate-binding protein"/>
    <property type="match status" value="1"/>
</dbReference>
<dbReference type="Gene3D" id="3.30.70.330">
    <property type="match status" value="4"/>
</dbReference>
<dbReference type="Gene3D" id="1.10.1900.10">
    <property type="entry name" value="c-terminal domain of poly(a) binding protein"/>
    <property type="match status" value="1"/>
</dbReference>
<dbReference type="InterPro" id="IPR012677">
    <property type="entry name" value="Nucleotide-bd_a/b_plait_sf"/>
</dbReference>
<dbReference type="InterPro" id="IPR036053">
    <property type="entry name" value="PABP-dom"/>
</dbReference>
<dbReference type="InterPro" id="IPR006515">
    <property type="entry name" value="PABP_1234"/>
</dbReference>
<dbReference type="InterPro" id="IPR002004">
    <property type="entry name" value="PABP_HYD_C"/>
</dbReference>
<dbReference type="InterPro" id="IPR035979">
    <property type="entry name" value="RBD_domain_sf"/>
</dbReference>
<dbReference type="InterPro" id="IPR045305">
    <property type="entry name" value="RRM2_I_PABPs"/>
</dbReference>
<dbReference type="InterPro" id="IPR000504">
    <property type="entry name" value="RRM_dom"/>
</dbReference>
<dbReference type="InterPro" id="IPR003954">
    <property type="entry name" value="RRM_dom_euk"/>
</dbReference>
<dbReference type="NCBIfam" id="TIGR01628">
    <property type="entry name" value="PABP-1234"/>
    <property type="match status" value="1"/>
</dbReference>
<dbReference type="PANTHER" id="PTHR24012">
    <property type="entry name" value="RNA BINDING PROTEIN"/>
    <property type="match status" value="1"/>
</dbReference>
<dbReference type="Pfam" id="PF00658">
    <property type="entry name" value="MLLE"/>
    <property type="match status" value="1"/>
</dbReference>
<dbReference type="Pfam" id="PF00076">
    <property type="entry name" value="RRM_1"/>
    <property type="match status" value="4"/>
</dbReference>
<dbReference type="SMART" id="SM00517">
    <property type="entry name" value="PolyA"/>
    <property type="match status" value="1"/>
</dbReference>
<dbReference type="SMART" id="SM00360">
    <property type="entry name" value="RRM"/>
    <property type="match status" value="4"/>
</dbReference>
<dbReference type="SMART" id="SM00361">
    <property type="entry name" value="RRM_1"/>
    <property type="match status" value="4"/>
</dbReference>
<dbReference type="SUPFAM" id="SSF63570">
    <property type="entry name" value="PABC (PABP) domain"/>
    <property type="match status" value="1"/>
</dbReference>
<dbReference type="SUPFAM" id="SSF54928">
    <property type="entry name" value="RNA-binding domain, RBD"/>
    <property type="match status" value="3"/>
</dbReference>
<dbReference type="PROSITE" id="PS51309">
    <property type="entry name" value="PABC"/>
    <property type="match status" value="1"/>
</dbReference>
<dbReference type="PROSITE" id="PS50102">
    <property type="entry name" value="RRM"/>
    <property type="match status" value="4"/>
</dbReference>